<name>LEC1_CROVR</name>
<gene>
    <name evidence="8" type="primary">LECCVA1</name>
</gene>
<dbReference type="EMBL" id="AF233283">
    <property type="protein sequence ID" value="AAG10402.1"/>
    <property type="molecule type" value="mRNA"/>
</dbReference>
<dbReference type="SMR" id="Q9FVA1"/>
<dbReference type="GO" id="GO:0005537">
    <property type="term" value="F:D-mannose binding"/>
    <property type="evidence" value="ECO:0007669"/>
    <property type="project" value="UniProtKB-KW"/>
</dbReference>
<dbReference type="GO" id="GO:0051707">
    <property type="term" value="P:response to other organism"/>
    <property type="evidence" value="ECO:0007669"/>
    <property type="project" value="UniProtKB-ARBA"/>
</dbReference>
<dbReference type="CDD" id="cd00028">
    <property type="entry name" value="B_lectin"/>
    <property type="match status" value="1"/>
</dbReference>
<dbReference type="Gene3D" id="2.90.10.10">
    <property type="entry name" value="Bulb-type lectin domain"/>
    <property type="match status" value="2"/>
</dbReference>
<dbReference type="InterPro" id="IPR001480">
    <property type="entry name" value="Bulb-type_lectin_dom"/>
</dbReference>
<dbReference type="InterPro" id="IPR036426">
    <property type="entry name" value="Bulb-type_lectin_dom_sf"/>
</dbReference>
<dbReference type="SMART" id="SM00108">
    <property type="entry name" value="B_lectin"/>
    <property type="match status" value="2"/>
</dbReference>
<dbReference type="SUPFAM" id="SSF51110">
    <property type="entry name" value="alpha-D-mannose-specific plant lectins"/>
    <property type="match status" value="2"/>
</dbReference>
<dbReference type="PROSITE" id="PS50927">
    <property type="entry name" value="BULB_LECTIN"/>
    <property type="match status" value="2"/>
</dbReference>
<evidence type="ECO:0000250" key="1">
    <source>
        <dbReference type="UniProtKB" id="P86626"/>
    </source>
</evidence>
<evidence type="ECO:0000255" key="2"/>
<evidence type="ECO:0000255" key="3">
    <source>
        <dbReference type="PROSITE-ProRule" id="PRU00038"/>
    </source>
</evidence>
<evidence type="ECO:0000269" key="4">
    <source>
    </source>
</evidence>
<evidence type="ECO:0000269" key="5">
    <source>
    </source>
</evidence>
<evidence type="ECO:0000303" key="6">
    <source>
    </source>
</evidence>
<evidence type="ECO:0000305" key="7"/>
<evidence type="ECO:0000312" key="8">
    <source>
        <dbReference type="EMBL" id="AAG10402.1"/>
    </source>
</evidence>
<comment type="function">
    <text evidence="4 5">Mannose-specific lectin. Has weak agglutinating activity towards trypsin-treated erythrocytes from rabbit but not from human.</text>
</comment>
<comment type="subunit">
    <text evidence="4 5">Heterotetramer of 2 domain 1 and 2 domain 2 chains arranged as a dimer of domain 1/domain 2 heterodimers.</text>
</comment>
<protein>
    <recommendedName>
        <fullName>Mannose-specific lectin 1</fullName>
    </recommendedName>
    <alternativeName>
        <fullName evidence="6">Agglutinin</fullName>
        <shortName evidence="6">CVA</shortName>
    </alternativeName>
    <alternativeName>
        <fullName evidence="6">Mannose-binding lectin</fullName>
    </alternativeName>
    <component>
        <recommendedName>
            <fullName>Mannose-specific lectin 1 chain 1</fullName>
        </recommendedName>
        <alternativeName>
            <fullName evidence="6">CVA-DOM1</fullName>
        </alternativeName>
    </component>
    <component>
        <recommendedName>
            <fullName>Mannose-specific lectin 1 chain 2</fullName>
        </recommendedName>
        <alternativeName>
            <fullName evidence="6">CVA-DOM2</fullName>
        </alternativeName>
    </component>
</protein>
<keyword id="KW-0903">Direct protein sequencing</keyword>
<keyword id="KW-1015">Disulfide bond</keyword>
<keyword id="KW-0348">Hemagglutinin</keyword>
<keyword id="KW-0430">Lectin</keyword>
<keyword id="KW-0465">Mannose-binding</keyword>
<keyword id="KW-0677">Repeat</keyword>
<keyword id="KW-0732">Signal</keyword>
<accession>Q9FVA1</accession>
<sequence>MAKSLVLSSLLLALLLAAPLASLADNNVLLTGDVLHTDNQLSFESAAFVMQGDCNLVLYNEAGGFQSNTHGRGVGCTLRLNNFGQLEIHSANSNTPVWVSLRNGIPVRGDYAAVLGPDQHVTIYGPAIWSTPAPNRHERGATVSNIPRVRNVLFSSQVMSDNAQLATRDYSLVMRDDCNLALTKGSKTNIVWESGTSGRGQHCFMRLGHTGLIEISDDRLNTVWRSNTVGQEGDYVLILQINGQAVVYGPAVWSTASPARGGASAAL</sequence>
<feature type="signal peptide" evidence="2">
    <location>
        <begin position="1"/>
        <end position="24"/>
    </location>
</feature>
<feature type="chain" id="PRO_0000395434" description="Mannose-specific lectin 1 chain 1" evidence="4">
    <location>
        <begin position="25"/>
        <end position="144"/>
    </location>
</feature>
<feature type="chain" id="PRO_0000395435" description="Mannose-specific lectin 1 chain 2" evidence="5">
    <location>
        <begin position="145"/>
        <end position="267"/>
    </location>
</feature>
<feature type="domain" description="Bulb-type lectin 1" evidence="3">
    <location>
        <begin position="26"/>
        <end position="136"/>
    </location>
</feature>
<feature type="domain" description="Bulb-type lectin 2" evidence="3">
    <location>
        <begin position="150"/>
        <end position="260"/>
    </location>
</feature>
<feature type="disulfide bond" evidence="1 3">
    <location>
        <begin position="54"/>
        <end position="76"/>
    </location>
</feature>
<feature type="disulfide bond" evidence="1 3">
    <location>
        <begin position="178"/>
        <end position="203"/>
    </location>
</feature>
<feature type="sequence conflict" description="In Ref. 2; AA sequence." evidence="7" ref="2">
    <original>R</original>
    <variation>Q</variation>
    <location>
        <position position="148"/>
    </location>
</feature>
<feature type="sequence conflict" description="In Ref. 2; AA sequence." evidence="7" ref="2">
    <original>S</original>
    <variation>Y</variation>
    <location>
        <position position="160"/>
    </location>
</feature>
<organism>
    <name type="scientific">Crocus vernus</name>
    <name type="common">Dutch crocus</name>
    <dbReference type="NCBI Taxonomy" id="87752"/>
    <lineage>
        <taxon>Eukaryota</taxon>
        <taxon>Viridiplantae</taxon>
        <taxon>Streptophyta</taxon>
        <taxon>Embryophyta</taxon>
        <taxon>Tracheophyta</taxon>
        <taxon>Spermatophyta</taxon>
        <taxon>Magnoliopsida</taxon>
        <taxon>Liliopsida</taxon>
        <taxon>Asparagales</taxon>
        <taxon>Iridaceae</taxon>
        <taxon>Crocoideae</taxon>
        <taxon>Croceae</taxon>
        <taxon>Crocus</taxon>
    </lineage>
</organism>
<reference evidence="7 8" key="1">
    <citation type="journal article" date="2000" name="Eur. J. Biochem.">
        <title>Cloning and characterization of a monocot mannose-binding lectin from Crocus vernus (family Iridaceae).</title>
        <authorList>
            <person name="Van Damme E.J."/>
            <person name="Astoul C.H."/>
            <person name="Barre A."/>
            <person name="Rouge P."/>
            <person name="Peumans W.J."/>
        </authorList>
    </citation>
    <scope>NUCLEOTIDE SEQUENCE [MRNA]</scope>
    <scope>FUNCTION</scope>
    <scope>SUBUNIT</scope>
    <source>
        <tissue evidence="4">Tuber</tissue>
    </source>
</reference>
<reference evidence="7" key="2">
    <citation type="journal article" date="1997" name="J. Biol. Chem.">
        <title>Purification and characterization of the alpha-1,3-mannosylmannose-recognizing lectin of Crocus vernus bulbs.</title>
        <authorList>
            <person name="Misaki A."/>
            <person name="Kakuta M."/>
            <person name="Meah Y."/>
            <person name="Goldstein I.J."/>
        </authorList>
    </citation>
    <scope>PROTEIN SEQUENCE OF 145-168</scope>
    <scope>FUNCTION</scope>
    <scope>SUBUNIT</scope>
    <source>
        <tissue evidence="5">Bulb</tissue>
    </source>
</reference>
<proteinExistence type="evidence at protein level"/>